<keyword id="KW-0963">Cytoplasm</keyword>
<keyword id="KW-0378">Hydrolase</keyword>
<keyword id="KW-0507">mRNA processing</keyword>
<keyword id="KW-1185">Reference proteome</keyword>
<feature type="chain" id="PRO_0000189636" description="mRNA-decapping enzyme-like protein">
    <location>
        <begin position="1"/>
        <end position="367"/>
    </location>
</feature>
<feature type="region of interest" description="Disordered" evidence="1">
    <location>
        <begin position="144"/>
        <end position="179"/>
    </location>
</feature>
<feature type="region of interest" description="Disordered" evidence="1">
    <location>
        <begin position="196"/>
        <end position="246"/>
    </location>
</feature>
<feature type="region of interest" description="Disordered" evidence="1">
    <location>
        <begin position="299"/>
        <end position="333"/>
    </location>
</feature>
<feature type="compositionally biased region" description="Polar residues" evidence="1">
    <location>
        <begin position="196"/>
        <end position="211"/>
    </location>
</feature>
<feature type="compositionally biased region" description="Low complexity" evidence="1">
    <location>
        <begin position="212"/>
        <end position="234"/>
    </location>
</feature>
<feature type="compositionally biased region" description="Polar residues" evidence="1">
    <location>
        <begin position="299"/>
        <end position="309"/>
    </location>
</feature>
<feature type="compositionally biased region" description="Pro residues" evidence="1">
    <location>
        <begin position="315"/>
        <end position="331"/>
    </location>
</feature>
<feature type="sequence conflict" description="In Ref. 1; AAC17938." evidence="6" ref="1">
    <original>P</original>
    <variation>PHQP</variation>
    <location>
        <position position="212"/>
    </location>
</feature>
<feature type="sequence conflict" description="In Ref. 1; AAC17938." evidence="6" ref="1">
    <original>T</original>
    <variation>S</variation>
    <location>
        <position position="293"/>
    </location>
</feature>
<name>DCP1_ARATH</name>
<gene>
    <name type="ordered locus">At1g08370</name>
    <name type="ORF">T27G7.7</name>
</gene>
<dbReference type="EC" id="3.-.-.-"/>
<dbReference type="EMBL" id="AF007109">
    <property type="protein sequence ID" value="AAC17938.1"/>
    <property type="molecule type" value="mRNA"/>
</dbReference>
<dbReference type="EMBL" id="AC006932">
    <property type="protein sequence ID" value="AAF22887.1"/>
    <property type="status" value="ALT_SEQ"/>
    <property type="molecule type" value="Genomic_DNA"/>
</dbReference>
<dbReference type="EMBL" id="CP002684">
    <property type="protein sequence ID" value="AEE28282.1"/>
    <property type="molecule type" value="Genomic_DNA"/>
</dbReference>
<dbReference type="PIR" id="T52141">
    <property type="entry name" value="T52141"/>
</dbReference>
<dbReference type="SMR" id="Q9SJF3"/>
<dbReference type="BioGRID" id="22598">
    <property type="interactions" value="12"/>
</dbReference>
<dbReference type="DIP" id="DIP-61572N"/>
<dbReference type="FunCoup" id="Q9SJF3">
    <property type="interactions" value="1589"/>
</dbReference>
<dbReference type="IntAct" id="Q9SJF3">
    <property type="interactions" value="5"/>
</dbReference>
<dbReference type="MINT" id="Q9SJF3"/>
<dbReference type="STRING" id="3702.Q9SJF3"/>
<dbReference type="GlyGen" id="Q9SJF3">
    <property type="glycosylation" value="2 sites"/>
</dbReference>
<dbReference type="iPTMnet" id="Q9SJF3"/>
<dbReference type="PaxDb" id="3702-AT1G08370.1"/>
<dbReference type="ProteomicsDB" id="224218"/>
<dbReference type="EnsemblPlants" id="AT1G08370.1">
    <property type="protein sequence ID" value="AT1G08370.1"/>
    <property type="gene ID" value="AT1G08370"/>
</dbReference>
<dbReference type="Gramene" id="AT1G08370.1">
    <property type="protein sequence ID" value="AT1G08370.1"/>
    <property type="gene ID" value="AT1G08370"/>
</dbReference>
<dbReference type="KEGG" id="ath:AT1G08370"/>
<dbReference type="Araport" id="AT1G08370"/>
<dbReference type="TAIR" id="AT1G08370">
    <property type="gene designation" value="DCP1"/>
</dbReference>
<dbReference type="eggNOG" id="KOG2868">
    <property type="taxonomic scope" value="Eukaryota"/>
</dbReference>
<dbReference type="HOGENOM" id="CLU_058542_1_0_1"/>
<dbReference type="InParanoid" id="Q9SJF3"/>
<dbReference type="OMA" id="RCCFNAL"/>
<dbReference type="PhylomeDB" id="Q9SJF3"/>
<dbReference type="PRO" id="PR:Q9SJF3"/>
<dbReference type="Proteomes" id="UP000006548">
    <property type="component" value="Chromosome 1"/>
</dbReference>
<dbReference type="ExpressionAtlas" id="Q9SJF3">
    <property type="expression patterns" value="baseline and differential"/>
</dbReference>
<dbReference type="GO" id="GO:0005737">
    <property type="term" value="C:cytoplasm"/>
    <property type="evidence" value="ECO:0000314"/>
    <property type="project" value="TAIR"/>
</dbReference>
<dbReference type="GO" id="GO:0005576">
    <property type="term" value="C:extracellular region"/>
    <property type="evidence" value="ECO:0007005"/>
    <property type="project" value="TAIR"/>
</dbReference>
<dbReference type="GO" id="GO:0000932">
    <property type="term" value="C:P-body"/>
    <property type="evidence" value="ECO:0000314"/>
    <property type="project" value="UniProtKB"/>
</dbReference>
<dbReference type="GO" id="GO:0008047">
    <property type="term" value="F:enzyme activator activity"/>
    <property type="evidence" value="ECO:0007669"/>
    <property type="project" value="InterPro"/>
</dbReference>
<dbReference type="GO" id="GO:0016787">
    <property type="term" value="F:hydrolase activity"/>
    <property type="evidence" value="ECO:0007669"/>
    <property type="project" value="UniProtKB-KW"/>
</dbReference>
<dbReference type="GO" id="GO:0042803">
    <property type="term" value="F:protein homodimerization activity"/>
    <property type="evidence" value="ECO:0000353"/>
    <property type="project" value="TAIR"/>
</dbReference>
<dbReference type="GO" id="GO:0000290">
    <property type="term" value="P:deadenylation-dependent decapping of nuclear-transcribed mRNA"/>
    <property type="evidence" value="ECO:0007669"/>
    <property type="project" value="InterPro"/>
</dbReference>
<dbReference type="GO" id="GO:0031087">
    <property type="term" value="P:deadenylation-independent decapping of nuclear-transcribed mRNA"/>
    <property type="evidence" value="ECO:0000314"/>
    <property type="project" value="TAIR"/>
</dbReference>
<dbReference type="GO" id="GO:0006952">
    <property type="term" value="P:defense response"/>
    <property type="evidence" value="ECO:0000314"/>
    <property type="project" value="TAIR"/>
</dbReference>
<dbReference type="GO" id="GO:0006397">
    <property type="term" value="P:mRNA processing"/>
    <property type="evidence" value="ECO:0007669"/>
    <property type="project" value="UniProtKB-KW"/>
</dbReference>
<dbReference type="CDD" id="cd13182">
    <property type="entry name" value="EVH1-like_Dcp1"/>
    <property type="match status" value="1"/>
</dbReference>
<dbReference type="FunFam" id="2.30.29.30:FF:000159">
    <property type="entry name" value="mRNA-decapping enzyme-like protein"/>
    <property type="match status" value="1"/>
</dbReference>
<dbReference type="Gene3D" id="2.30.29.30">
    <property type="entry name" value="Pleckstrin-homology domain (PH domain)/Phosphotyrosine-binding domain (PTB)"/>
    <property type="match status" value="1"/>
</dbReference>
<dbReference type="InterPro" id="IPR010334">
    <property type="entry name" value="Dcp1"/>
</dbReference>
<dbReference type="InterPro" id="IPR011993">
    <property type="entry name" value="PH-like_dom_sf"/>
</dbReference>
<dbReference type="PANTHER" id="PTHR16290:SF0">
    <property type="entry name" value="DECAPPING PROTEIN 1, ISOFORM A"/>
    <property type="match status" value="1"/>
</dbReference>
<dbReference type="PANTHER" id="PTHR16290">
    <property type="entry name" value="TRANSCRIPTION FACTOR SMIF DECAPPING ENZYME DCP1"/>
    <property type="match status" value="1"/>
</dbReference>
<dbReference type="Pfam" id="PF06058">
    <property type="entry name" value="DCP1"/>
    <property type="match status" value="1"/>
</dbReference>
<dbReference type="SUPFAM" id="SSF50729">
    <property type="entry name" value="PH domain-like"/>
    <property type="match status" value="1"/>
</dbReference>
<protein>
    <recommendedName>
        <fullName>mRNA-decapping enzyme-like protein</fullName>
        <ecNumber>3.-.-.-</ecNumber>
    </recommendedName>
    <alternativeName>
        <fullName>DCP1 homolog</fullName>
    </alternativeName>
</protein>
<proteinExistence type="evidence at protein level"/>
<accession>Q9SJF3</accession>
<accession>O64895</accession>
<organism>
    <name type="scientific">Arabidopsis thaliana</name>
    <name type="common">Mouse-ear cress</name>
    <dbReference type="NCBI Taxonomy" id="3702"/>
    <lineage>
        <taxon>Eukaryota</taxon>
        <taxon>Viridiplantae</taxon>
        <taxon>Streptophyta</taxon>
        <taxon>Embryophyta</taxon>
        <taxon>Tracheophyta</taxon>
        <taxon>Spermatophyta</taxon>
        <taxon>Magnoliopsida</taxon>
        <taxon>eudicotyledons</taxon>
        <taxon>Gunneridae</taxon>
        <taxon>Pentapetalae</taxon>
        <taxon>rosids</taxon>
        <taxon>malvids</taxon>
        <taxon>Brassicales</taxon>
        <taxon>Brassicaceae</taxon>
        <taxon>Camelineae</taxon>
        <taxon>Arabidopsis</taxon>
    </lineage>
</organism>
<comment type="function">
    <text evidence="2 3">As a component of the decapping complex, involved in the degradation of mRNAs. Essential for postembryonic development.</text>
</comment>
<comment type="subunit">
    <text evidence="2 4 5">Homodimer. Component of the decapping complex. Interacts with DCP2 and DCP5 (PubMed:17158604, PubMed:19855049). Interacts with BCHA1 (PubMed:26133670).</text>
</comment>
<comment type="interaction">
    <interactant intactId="EBI-7786643">
        <id>Q9SJF3</id>
    </interactant>
    <interactant intactId="EBI-4425465">
        <id>Q8GW31</id>
        <label>DCP2</label>
    </interactant>
    <organismsDiffer>false</organismsDiffer>
    <experiments>2</experiments>
</comment>
<comment type="interaction">
    <interactant intactId="EBI-7786643">
        <id>Q9SJF3</id>
    </interactant>
    <interactant intactId="EBI-4440994">
        <id>Q9C658</id>
        <label>DCP5</label>
    </interactant>
    <organismsDiffer>false</organismsDiffer>
    <experiments>2</experiments>
</comment>
<comment type="interaction">
    <interactant intactId="EBI-7786643">
        <id>Q9SJF3</id>
    </interactant>
    <interactant intactId="EBI-3386960">
        <id>F4HZB2</id>
        <label>SPI</label>
    </interactant>
    <organismsDiffer>false</organismsDiffer>
    <experiments>5</experiments>
</comment>
<comment type="interaction">
    <interactant intactId="EBI-7786643">
        <id>Q9SJF3</id>
    </interactant>
    <interactant intactId="EBI-2947053">
        <id>Q92636</id>
        <label>NSMAF</label>
    </interactant>
    <organismsDiffer>true</organismsDiffer>
    <experiments>2</experiments>
</comment>
<comment type="subcellular location">
    <subcellularLocation>
        <location evidence="2 3 4 5">Cytoplasm</location>
        <location evidence="2 3 4 5">P-body</location>
    </subcellularLocation>
</comment>
<comment type="tissue specificity">
    <text evidence="2">Expressed in seedlings, mostly in root tips, root hairs, and the vascular system. Also present in roots, leaves, stems, and flowers.</text>
</comment>
<comment type="developmental stage">
    <text evidence="4">Gradually accumulates during seed maturation to reached maximum levels in dry seeds. Fades progressively upon germination.</text>
</comment>
<comment type="disruption phenotype">
    <text evidence="2">Lethal phenotype at the seedling cotyledon stage, with disorganized veins, swollen root hairs, and altered epidermal cell morphology.</text>
</comment>
<comment type="similarity">
    <text evidence="6">Belongs to the DCP1 family.</text>
</comment>
<comment type="sequence caution" evidence="6">
    <conflict type="erroneous gene model prediction">
        <sequence resource="EMBL-CDS" id="AAF22887"/>
    </conflict>
</comment>
<evidence type="ECO:0000256" key="1">
    <source>
        <dbReference type="SAM" id="MobiDB-lite"/>
    </source>
</evidence>
<evidence type="ECO:0000269" key="2">
    <source>
    </source>
</evidence>
<evidence type="ECO:0000269" key="3">
    <source>
    </source>
</evidence>
<evidence type="ECO:0000269" key="4">
    <source>
    </source>
</evidence>
<evidence type="ECO:0000269" key="5">
    <source>
    </source>
</evidence>
<evidence type="ECO:0000305" key="6"/>
<reference key="1">
    <citation type="submission" date="1997-06" db="EMBL/GenBank/DDBJ databases">
        <title>Putative homolog of yeast dcp1 gene.</title>
        <authorList>
            <person name="van Hoof A."/>
            <person name="Green P.J."/>
        </authorList>
    </citation>
    <scope>NUCLEOTIDE SEQUENCE [MRNA]</scope>
    <source>
        <strain>cv. Columbia</strain>
    </source>
</reference>
<reference key="2">
    <citation type="journal article" date="2000" name="Nature">
        <title>Sequence and analysis of chromosome 1 of the plant Arabidopsis thaliana.</title>
        <authorList>
            <person name="Theologis A."/>
            <person name="Ecker J.R."/>
            <person name="Palm C.J."/>
            <person name="Federspiel N.A."/>
            <person name="Kaul S."/>
            <person name="White O."/>
            <person name="Alonso J."/>
            <person name="Altafi H."/>
            <person name="Araujo R."/>
            <person name="Bowman C.L."/>
            <person name="Brooks S.Y."/>
            <person name="Buehler E."/>
            <person name="Chan A."/>
            <person name="Chao Q."/>
            <person name="Chen H."/>
            <person name="Cheuk R.F."/>
            <person name="Chin C.W."/>
            <person name="Chung M.K."/>
            <person name="Conn L."/>
            <person name="Conway A.B."/>
            <person name="Conway A.R."/>
            <person name="Creasy T.H."/>
            <person name="Dewar K."/>
            <person name="Dunn P."/>
            <person name="Etgu P."/>
            <person name="Feldblyum T.V."/>
            <person name="Feng J.-D."/>
            <person name="Fong B."/>
            <person name="Fujii C.Y."/>
            <person name="Gill J.E."/>
            <person name="Goldsmith A.D."/>
            <person name="Haas B."/>
            <person name="Hansen N.F."/>
            <person name="Hughes B."/>
            <person name="Huizar L."/>
            <person name="Hunter J.L."/>
            <person name="Jenkins J."/>
            <person name="Johnson-Hopson C."/>
            <person name="Khan S."/>
            <person name="Khaykin E."/>
            <person name="Kim C.J."/>
            <person name="Koo H.L."/>
            <person name="Kremenetskaia I."/>
            <person name="Kurtz D.B."/>
            <person name="Kwan A."/>
            <person name="Lam B."/>
            <person name="Langin-Hooper S."/>
            <person name="Lee A."/>
            <person name="Lee J.M."/>
            <person name="Lenz C.A."/>
            <person name="Li J.H."/>
            <person name="Li Y.-P."/>
            <person name="Lin X."/>
            <person name="Liu S.X."/>
            <person name="Liu Z.A."/>
            <person name="Luros J.S."/>
            <person name="Maiti R."/>
            <person name="Marziali A."/>
            <person name="Militscher J."/>
            <person name="Miranda M."/>
            <person name="Nguyen M."/>
            <person name="Nierman W.C."/>
            <person name="Osborne B.I."/>
            <person name="Pai G."/>
            <person name="Peterson J."/>
            <person name="Pham P.K."/>
            <person name="Rizzo M."/>
            <person name="Rooney T."/>
            <person name="Rowley D."/>
            <person name="Sakano H."/>
            <person name="Salzberg S.L."/>
            <person name="Schwartz J.R."/>
            <person name="Shinn P."/>
            <person name="Southwick A.M."/>
            <person name="Sun H."/>
            <person name="Tallon L.J."/>
            <person name="Tambunga G."/>
            <person name="Toriumi M.J."/>
            <person name="Town C.D."/>
            <person name="Utterback T."/>
            <person name="Van Aken S."/>
            <person name="Vaysberg M."/>
            <person name="Vysotskaia V.S."/>
            <person name="Walker M."/>
            <person name="Wu D."/>
            <person name="Yu G."/>
            <person name="Fraser C.M."/>
            <person name="Venter J.C."/>
            <person name="Davis R.W."/>
        </authorList>
    </citation>
    <scope>NUCLEOTIDE SEQUENCE [LARGE SCALE GENOMIC DNA]</scope>
    <source>
        <strain>cv. Columbia</strain>
    </source>
</reference>
<reference key="3">
    <citation type="journal article" date="2017" name="Plant J.">
        <title>Araport11: a complete reannotation of the Arabidopsis thaliana reference genome.</title>
        <authorList>
            <person name="Cheng C.Y."/>
            <person name="Krishnakumar V."/>
            <person name="Chan A.P."/>
            <person name="Thibaud-Nissen F."/>
            <person name="Schobel S."/>
            <person name="Town C.D."/>
        </authorList>
    </citation>
    <scope>GENOME REANNOTATION</scope>
    <source>
        <strain>cv. Columbia</strain>
    </source>
</reference>
<reference key="4">
    <citation type="journal article" date="2006" name="Plant Cell">
        <title>Arabidopsis DCP2, DCP1, and VARICOSE form a decapping complex required for postembryonic development.</title>
        <authorList>
            <person name="Xu J."/>
            <person name="Yang J.-Y."/>
            <person name="Niu Q.-W."/>
            <person name="Chua N.-H."/>
        </authorList>
    </citation>
    <scope>FUNCTION</scope>
    <scope>INTERACTION WITH DCP2</scope>
    <scope>SUBCELLULAR LOCATION</scope>
    <scope>TISSUE SPECIFICITY</scope>
    <scope>DISRUPTION PHENOTYPE</scope>
</reference>
<reference key="5">
    <citation type="journal article" date="2007" name="FEBS Lett.">
        <title>Characterization of Arabidopsis decapping proteins AtDCP1 and AtDCP2, which are essential for post-embryonic development.</title>
        <authorList>
            <person name="Iwasaki S."/>
            <person name="Takeda A."/>
            <person name="Motose H."/>
            <person name="Watanabe Y."/>
        </authorList>
    </citation>
    <scope>FUNCTION</scope>
    <scope>HOMODIMER</scope>
    <scope>SUBCELLULAR LOCATION</scope>
    <source>
        <strain>cv. Columbia</strain>
    </source>
</reference>
<reference key="6">
    <citation type="journal article" date="2009" name="Plant Cell">
        <title>Arabidopsis decapping 5 is required for mRNA decapping, P-body formation, and translational repression during postembryonic development.</title>
        <authorList>
            <person name="Xu J."/>
            <person name="Chua N.-H."/>
        </authorList>
    </citation>
    <scope>INTERACTION WITH DCP5</scope>
    <scope>SUBCELLULAR LOCATION</scope>
    <scope>DEVELOPMENTAL STAGE</scope>
</reference>
<reference key="7">
    <citation type="journal article" date="2015" name="PLoS Biol.">
        <title>The BEACH domain protein SPIRRIG is essential for Arabidopsis salt stress tolerance and functions as a regulator of transcript stabilization and localization.</title>
        <authorList>
            <person name="Steffens A."/>
            <person name="Braeutigam A."/>
            <person name="Jakoby M."/>
            <person name="Huelskamp M."/>
        </authorList>
    </citation>
    <scope>INTERACTION WITH BCHA1</scope>
    <scope>SUBCELLULAR LOCATION</scope>
</reference>
<sequence>MSQNGKIIPNLDQNSTRLLNLTVLQRIDPYIEEILITAAHVTFYEFNIELSQWSRKDVEGSLFVVKRSTQPRFQFIVMNRRNTDNLVENLLGDFEYEVQGPYLLYRNASQEVNGIWFYNKRECEEVATLFNRILSAYSKVNQKPKASSSKSEFEELEAKPTMAVMDGPLEPSSTARDAPDDPAFVNFFSSTMNLGNTASGSASGPYQSSAIPHQPHQPHQPTIAPPVAAAAPPQIQSPPPLQSSSPLMTLFDNNPEVISSNSNIHTDLVTPSFFGPPRMMAQPHLIPGVSMPTAPPLNPNNASHQQRSYGTPVLQPFPPPTPPPSLAPAPTGPVISRDKVKEALLSLLQEDEFIDKITRTLQNALQQ</sequence>